<proteinExistence type="inferred from homology"/>
<dbReference type="EMBL" id="CP001172">
    <property type="protein sequence ID" value="ACJ56172.1"/>
    <property type="molecule type" value="Genomic_DNA"/>
</dbReference>
<dbReference type="RefSeq" id="WP_000941215.1">
    <property type="nucleotide sequence ID" value="NZ_CP001172.1"/>
</dbReference>
<dbReference type="SMR" id="B7GW09"/>
<dbReference type="GeneID" id="92895310"/>
<dbReference type="HOGENOM" id="CLU_078858_2_1_6"/>
<dbReference type="Proteomes" id="UP000006924">
    <property type="component" value="Chromosome"/>
</dbReference>
<dbReference type="GO" id="GO:0022625">
    <property type="term" value="C:cytosolic large ribosomal subunit"/>
    <property type="evidence" value="ECO:0007669"/>
    <property type="project" value="TreeGrafter"/>
</dbReference>
<dbReference type="GO" id="GO:0019843">
    <property type="term" value="F:rRNA binding"/>
    <property type="evidence" value="ECO:0007669"/>
    <property type="project" value="UniProtKB-UniRule"/>
</dbReference>
<dbReference type="GO" id="GO:0003735">
    <property type="term" value="F:structural constituent of ribosome"/>
    <property type="evidence" value="ECO:0007669"/>
    <property type="project" value="InterPro"/>
</dbReference>
<dbReference type="GO" id="GO:0000049">
    <property type="term" value="F:tRNA binding"/>
    <property type="evidence" value="ECO:0007669"/>
    <property type="project" value="UniProtKB-KW"/>
</dbReference>
<dbReference type="GO" id="GO:0006412">
    <property type="term" value="P:translation"/>
    <property type="evidence" value="ECO:0007669"/>
    <property type="project" value="UniProtKB-UniRule"/>
</dbReference>
<dbReference type="CDD" id="cd01433">
    <property type="entry name" value="Ribosomal_L16_L10e"/>
    <property type="match status" value="1"/>
</dbReference>
<dbReference type="FunFam" id="3.90.1170.10:FF:000001">
    <property type="entry name" value="50S ribosomal protein L16"/>
    <property type="match status" value="1"/>
</dbReference>
<dbReference type="Gene3D" id="3.90.1170.10">
    <property type="entry name" value="Ribosomal protein L10e/L16"/>
    <property type="match status" value="1"/>
</dbReference>
<dbReference type="HAMAP" id="MF_01342">
    <property type="entry name" value="Ribosomal_uL16"/>
    <property type="match status" value="1"/>
</dbReference>
<dbReference type="InterPro" id="IPR047873">
    <property type="entry name" value="Ribosomal_uL16"/>
</dbReference>
<dbReference type="InterPro" id="IPR000114">
    <property type="entry name" value="Ribosomal_uL16_bact-type"/>
</dbReference>
<dbReference type="InterPro" id="IPR020798">
    <property type="entry name" value="Ribosomal_uL16_CS"/>
</dbReference>
<dbReference type="InterPro" id="IPR016180">
    <property type="entry name" value="Ribosomal_uL16_dom"/>
</dbReference>
<dbReference type="InterPro" id="IPR036920">
    <property type="entry name" value="Ribosomal_uL16_sf"/>
</dbReference>
<dbReference type="NCBIfam" id="TIGR01164">
    <property type="entry name" value="rplP_bact"/>
    <property type="match status" value="1"/>
</dbReference>
<dbReference type="PANTHER" id="PTHR12220">
    <property type="entry name" value="50S/60S RIBOSOMAL PROTEIN L16"/>
    <property type="match status" value="1"/>
</dbReference>
<dbReference type="PANTHER" id="PTHR12220:SF13">
    <property type="entry name" value="LARGE RIBOSOMAL SUBUNIT PROTEIN UL16M"/>
    <property type="match status" value="1"/>
</dbReference>
<dbReference type="Pfam" id="PF00252">
    <property type="entry name" value="Ribosomal_L16"/>
    <property type="match status" value="1"/>
</dbReference>
<dbReference type="PRINTS" id="PR00060">
    <property type="entry name" value="RIBOSOMALL16"/>
</dbReference>
<dbReference type="SUPFAM" id="SSF54686">
    <property type="entry name" value="Ribosomal protein L16p/L10e"/>
    <property type="match status" value="1"/>
</dbReference>
<dbReference type="PROSITE" id="PS00701">
    <property type="entry name" value="RIBOSOMAL_L16_2"/>
    <property type="match status" value="1"/>
</dbReference>
<feature type="chain" id="PRO_1000142906" description="Large ribosomal subunit protein uL16">
    <location>
        <begin position="1"/>
        <end position="137"/>
    </location>
</feature>
<reference key="1">
    <citation type="journal article" date="2008" name="J. Bacteriol.">
        <title>Comparative genome sequence analysis of multidrug-resistant Acinetobacter baumannii.</title>
        <authorList>
            <person name="Adams M.D."/>
            <person name="Goglin K."/>
            <person name="Molyneaux N."/>
            <person name="Hujer K.M."/>
            <person name="Lavender H."/>
            <person name="Jamison J.J."/>
            <person name="MacDonald I.J."/>
            <person name="Martin K.M."/>
            <person name="Russo T."/>
            <person name="Campagnari A.A."/>
            <person name="Hujer A.M."/>
            <person name="Bonomo R.A."/>
            <person name="Gill S.R."/>
        </authorList>
    </citation>
    <scope>NUCLEOTIDE SEQUENCE [LARGE SCALE GENOMIC DNA]</scope>
    <source>
        <strain>AB307-0294</strain>
    </source>
</reference>
<gene>
    <name evidence="1" type="primary">rplP</name>
    <name type="ordered locus">ABBFA_000439</name>
</gene>
<accession>B7GW09</accession>
<comment type="function">
    <text evidence="1">Binds 23S rRNA and is also seen to make contacts with the A and possibly P site tRNAs.</text>
</comment>
<comment type="subunit">
    <text evidence="1">Part of the 50S ribosomal subunit.</text>
</comment>
<comment type="similarity">
    <text evidence="1">Belongs to the universal ribosomal protein uL16 family.</text>
</comment>
<sequence length="137" mass="15466">MLQPKRTKFRKVHKGRNTGLAHRGSTVSFGSIAIKATERGRMTARQIEAARRTISRRIKRGGKIFIRVFPDKPITEKPLEVRMGNGKGNVEYWVCEIKPGKILYEIEGVNEDLAREAFALAAAKLPFKTTIVTRTVM</sequence>
<organism>
    <name type="scientific">Acinetobacter baumannii (strain AB307-0294)</name>
    <dbReference type="NCBI Taxonomy" id="557600"/>
    <lineage>
        <taxon>Bacteria</taxon>
        <taxon>Pseudomonadati</taxon>
        <taxon>Pseudomonadota</taxon>
        <taxon>Gammaproteobacteria</taxon>
        <taxon>Moraxellales</taxon>
        <taxon>Moraxellaceae</taxon>
        <taxon>Acinetobacter</taxon>
        <taxon>Acinetobacter calcoaceticus/baumannii complex</taxon>
    </lineage>
</organism>
<evidence type="ECO:0000255" key="1">
    <source>
        <dbReference type="HAMAP-Rule" id="MF_01342"/>
    </source>
</evidence>
<evidence type="ECO:0000305" key="2"/>
<name>RL16_ACIB3</name>
<keyword id="KW-0687">Ribonucleoprotein</keyword>
<keyword id="KW-0689">Ribosomal protein</keyword>
<keyword id="KW-0694">RNA-binding</keyword>
<keyword id="KW-0699">rRNA-binding</keyword>
<keyword id="KW-0820">tRNA-binding</keyword>
<protein>
    <recommendedName>
        <fullName evidence="1">Large ribosomal subunit protein uL16</fullName>
    </recommendedName>
    <alternativeName>
        <fullName evidence="2">50S ribosomal protein L16</fullName>
    </alternativeName>
</protein>